<gene>
    <name evidence="1" type="primary">rpoZ</name>
    <name type="ordered locus">PCC7424_3383</name>
</gene>
<name>RPOZ_GLOC7</name>
<proteinExistence type="inferred from homology"/>
<protein>
    <recommendedName>
        <fullName evidence="1">DNA-directed RNA polymerase subunit omega</fullName>
        <shortName evidence="1">RNAP omega subunit</shortName>
        <ecNumber evidence="1">2.7.7.6</ecNumber>
    </recommendedName>
    <alternativeName>
        <fullName evidence="1">RNA polymerase omega subunit</fullName>
    </alternativeName>
    <alternativeName>
        <fullName evidence="1">Transcriptase subunit omega</fullName>
    </alternativeName>
</protein>
<evidence type="ECO:0000255" key="1">
    <source>
        <dbReference type="HAMAP-Rule" id="MF_00366"/>
    </source>
</evidence>
<sequence>MQKRPAFDSSHIMYRAEELMSHASNRYRITVQVANRAKRRRYEEFDNIDDPMMKPTIRAIIEMSDEISQDDIISD</sequence>
<comment type="function">
    <text evidence="1">Promotes RNA polymerase assembly. Latches the N- and C-terminal regions of the beta' subunit thereby facilitating its interaction with the beta and alpha subunits.</text>
</comment>
<comment type="catalytic activity">
    <reaction evidence="1">
        <text>RNA(n) + a ribonucleoside 5'-triphosphate = RNA(n+1) + diphosphate</text>
        <dbReference type="Rhea" id="RHEA:21248"/>
        <dbReference type="Rhea" id="RHEA-COMP:14527"/>
        <dbReference type="Rhea" id="RHEA-COMP:17342"/>
        <dbReference type="ChEBI" id="CHEBI:33019"/>
        <dbReference type="ChEBI" id="CHEBI:61557"/>
        <dbReference type="ChEBI" id="CHEBI:140395"/>
        <dbReference type="EC" id="2.7.7.6"/>
    </reaction>
</comment>
<comment type="subunit">
    <text evidence="1">In cyanobacteria the RNAP catalytic core is composed of 2 alpha, 1 beta, 1 beta', 1 gamma and 1 omega subunit. When a sigma factor is associated with the core the holoenzyme is formed, which can initiate transcription.</text>
</comment>
<comment type="similarity">
    <text evidence="1">Belongs to the RNA polymerase subunit omega family.</text>
</comment>
<reference key="1">
    <citation type="journal article" date="2011" name="MBio">
        <title>Novel metabolic attributes of the genus Cyanothece, comprising a group of unicellular nitrogen-fixing Cyanobacteria.</title>
        <authorList>
            <person name="Bandyopadhyay A."/>
            <person name="Elvitigala T."/>
            <person name="Welsh E."/>
            <person name="Stockel J."/>
            <person name="Liberton M."/>
            <person name="Min H."/>
            <person name="Sherman L.A."/>
            <person name="Pakrasi H.B."/>
        </authorList>
    </citation>
    <scope>NUCLEOTIDE SEQUENCE [LARGE SCALE GENOMIC DNA]</scope>
    <source>
        <strain>PCC 7424</strain>
    </source>
</reference>
<dbReference type="EC" id="2.7.7.6" evidence="1"/>
<dbReference type="EMBL" id="CP001291">
    <property type="protein sequence ID" value="ACK71778.1"/>
    <property type="molecule type" value="Genomic_DNA"/>
</dbReference>
<dbReference type="RefSeq" id="WP_015955373.1">
    <property type="nucleotide sequence ID" value="NC_011729.1"/>
</dbReference>
<dbReference type="SMR" id="B7KF62"/>
<dbReference type="STRING" id="65393.PCC7424_3383"/>
<dbReference type="KEGG" id="cyc:PCC7424_3383"/>
<dbReference type="eggNOG" id="ENOG5032RMS">
    <property type="taxonomic scope" value="Bacteria"/>
</dbReference>
<dbReference type="HOGENOM" id="CLU_175526_0_0_3"/>
<dbReference type="OrthoDB" id="463386at2"/>
<dbReference type="Proteomes" id="UP000002384">
    <property type="component" value="Chromosome"/>
</dbReference>
<dbReference type="GO" id="GO:0000428">
    <property type="term" value="C:DNA-directed RNA polymerase complex"/>
    <property type="evidence" value="ECO:0007669"/>
    <property type="project" value="UniProtKB-KW"/>
</dbReference>
<dbReference type="GO" id="GO:0003677">
    <property type="term" value="F:DNA binding"/>
    <property type="evidence" value="ECO:0007669"/>
    <property type="project" value="UniProtKB-UniRule"/>
</dbReference>
<dbReference type="GO" id="GO:0003899">
    <property type="term" value="F:DNA-directed RNA polymerase activity"/>
    <property type="evidence" value="ECO:0007669"/>
    <property type="project" value="UniProtKB-UniRule"/>
</dbReference>
<dbReference type="GO" id="GO:0006351">
    <property type="term" value="P:DNA-templated transcription"/>
    <property type="evidence" value="ECO:0007669"/>
    <property type="project" value="UniProtKB-UniRule"/>
</dbReference>
<dbReference type="HAMAP" id="MF_00366">
    <property type="entry name" value="RNApol_bact_RpoZ"/>
    <property type="match status" value="1"/>
</dbReference>
<dbReference type="InterPro" id="IPR003716">
    <property type="entry name" value="DNA-dir_RNA_pol_omega"/>
</dbReference>
<dbReference type="InterPro" id="IPR006110">
    <property type="entry name" value="Pol_omega/Rpo6/RPB6"/>
</dbReference>
<dbReference type="InterPro" id="IPR036161">
    <property type="entry name" value="RPB6/omega-like_sf"/>
</dbReference>
<dbReference type="NCBIfam" id="NF001574">
    <property type="entry name" value="PRK00392.2-5"/>
    <property type="match status" value="1"/>
</dbReference>
<dbReference type="Pfam" id="PF01192">
    <property type="entry name" value="RNA_pol_Rpb6"/>
    <property type="match status" value="1"/>
</dbReference>
<dbReference type="SUPFAM" id="SSF63562">
    <property type="entry name" value="RPB6/omega subunit-like"/>
    <property type="match status" value="1"/>
</dbReference>
<accession>B7KF62</accession>
<feature type="chain" id="PRO_1000121209" description="DNA-directed RNA polymerase subunit omega">
    <location>
        <begin position="1"/>
        <end position="75"/>
    </location>
</feature>
<keyword id="KW-0240">DNA-directed RNA polymerase</keyword>
<keyword id="KW-0548">Nucleotidyltransferase</keyword>
<keyword id="KW-1185">Reference proteome</keyword>
<keyword id="KW-0804">Transcription</keyword>
<keyword id="KW-0808">Transferase</keyword>
<organism>
    <name type="scientific">Gloeothece citriformis (strain PCC 7424)</name>
    <name type="common">Cyanothece sp. (strain PCC 7424)</name>
    <dbReference type="NCBI Taxonomy" id="65393"/>
    <lineage>
        <taxon>Bacteria</taxon>
        <taxon>Bacillati</taxon>
        <taxon>Cyanobacteriota</taxon>
        <taxon>Cyanophyceae</taxon>
        <taxon>Oscillatoriophycideae</taxon>
        <taxon>Chroococcales</taxon>
        <taxon>Aphanothecaceae</taxon>
        <taxon>Gloeothece</taxon>
        <taxon>Gloeothece citriformis</taxon>
    </lineage>
</organism>